<accession>Q8BL95</accession>
<accession>Q8VCL7</accession>
<comment type="function">
    <text evidence="4">Plays a role in motile cilium function, possibly by acting on outer dynein arm assembly. Seems to be important for initiation rather than maintenance of cilium motility. Required for correct positioning of cilia at the apical cell surface, suggesting an additional role in the planar cell polarity (PCP) pathway. May suppress canonical Wnt signaling activity.</text>
</comment>
<comment type="subunit">
    <text evidence="2">Interacts with ZMYND10.</text>
</comment>
<comment type="subcellular location">
    <subcellularLocation>
        <location evidence="3">Cytoplasm</location>
    </subcellularLocation>
    <subcellularLocation>
        <location evidence="1">Cytoplasm</location>
        <location evidence="1">Cytoskeleton</location>
        <location evidence="1">Cilium basal body</location>
    </subcellularLocation>
    <text evidence="3">Partially colocalized with SASS6 in cytoplasmic puncta, suggesting a centrosomal localization.</text>
</comment>
<comment type="similarity">
    <text evidence="5">Belongs to the CFAP298 family.</text>
</comment>
<gene>
    <name evidence="2" type="primary">Cfap298</name>
</gene>
<feature type="chain" id="PRO_0000424911" description="Cilia- and flagella-associated protein 298">
    <location>
        <begin position="1"/>
        <end position="290"/>
    </location>
</feature>
<feature type="sequence conflict" description="In Ref. 4; AAH19533." evidence="5" ref="4">
    <original>P</original>
    <variation>H</variation>
    <location>
        <position position="59"/>
    </location>
</feature>
<name>CF298_MOUSE</name>
<dbReference type="EMBL" id="AK045905">
    <property type="protein sequence ID" value="BAC32526.1"/>
    <property type="molecule type" value="mRNA"/>
</dbReference>
<dbReference type="EMBL" id="AC134560">
    <property type="status" value="NOT_ANNOTATED_CDS"/>
    <property type="molecule type" value="Genomic_DNA"/>
</dbReference>
<dbReference type="EMBL" id="CH466602">
    <property type="protein sequence ID" value="EDL03846.1"/>
    <property type="molecule type" value="Genomic_DNA"/>
</dbReference>
<dbReference type="EMBL" id="BC019533">
    <property type="protein sequence ID" value="AAH19533.1"/>
    <property type="molecule type" value="mRNA"/>
</dbReference>
<dbReference type="CCDS" id="CCDS28321.1"/>
<dbReference type="RefSeq" id="NP_080778.2">
    <property type="nucleotide sequence ID" value="NM_026502.2"/>
</dbReference>
<dbReference type="BioGRID" id="212591">
    <property type="interactions" value="1"/>
</dbReference>
<dbReference type="FunCoup" id="Q8BL95">
    <property type="interactions" value="897"/>
</dbReference>
<dbReference type="STRING" id="10090.ENSMUSP00000023694"/>
<dbReference type="iPTMnet" id="Q8BL95"/>
<dbReference type="PhosphoSitePlus" id="Q8BL95"/>
<dbReference type="REPRODUCTION-2DPAGE" id="IPI00281363"/>
<dbReference type="PaxDb" id="10090-ENSMUSP00000023694"/>
<dbReference type="PeptideAtlas" id="Q8BL95"/>
<dbReference type="Pumba" id="Q8BL95"/>
<dbReference type="DNASU" id="68001"/>
<dbReference type="Ensembl" id="ENSMUST00000023694.11">
    <property type="protein sequence ID" value="ENSMUSP00000023694.4"/>
    <property type="gene ID" value="ENSMUSG00000022972.11"/>
</dbReference>
<dbReference type="GeneID" id="68001"/>
<dbReference type="KEGG" id="mmu:68001"/>
<dbReference type="UCSC" id="uc007zwt.2">
    <property type="organism name" value="mouse"/>
</dbReference>
<dbReference type="AGR" id="MGI:1915251"/>
<dbReference type="CTD" id="56683"/>
<dbReference type="MGI" id="MGI:1915251">
    <property type="gene designation" value="Cfap298"/>
</dbReference>
<dbReference type="VEuPathDB" id="HostDB:ENSMUSG00000022972"/>
<dbReference type="eggNOG" id="ENOG502QQ3Z">
    <property type="taxonomic scope" value="Eukaryota"/>
</dbReference>
<dbReference type="GeneTree" id="ENSGT00390000006278"/>
<dbReference type="HOGENOM" id="CLU_064854_0_0_1"/>
<dbReference type="InParanoid" id="Q8BL95"/>
<dbReference type="OMA" id="YRKQEEW"/>
<dbReference type="OrthoDB" id="276065at2759"/>
<dbReference type="PhylomeDB" id="Q8BL95"/>
<dbReference type="TreeFam" id="TF323482"/>
<dbReference type="BioGRID-ORCS" id="68001">
    <property type="hits" value="26 hits in 76 CRISPR screens"/>
</dbReference>
<dbReference type="ChiTaRS" id="Cfap298">
    <property type="organism name" value="mouse"/>
</dbReference>
<dbReference type="PRO" id="PR:Q8BL95"/>
<dbReference type="Proteomes" id="UP000000589">
    <property type="component" value="Chromosome 16"/>
</dbReference>
<dbReference type="RNAct" id="Q8BL95">
    <property type="molecule type" value="protein"/>
</dbReference>
<dbReference type="Bgee" id="ENSMUSG00000022972">
    <property type="expression patterns" value="Expressed in animal zygote and 255 other cell types or tissues"/>
</dbReference>
<dbReference type="ExpressionAtlas" id="Q8BL95">
    <property type="expression patterns" value="baseline and differential"/>
</dbReference>
<dbReference type="GO" id="GO:0005813">
    <property type="term" value="C:centrosome"/>
    <property type="evidence" value="ECO:0007669"/>
    <property type="project" value="Ensembl"/>
</dbReference>
<dbReference type="GO" id="GO:0036064">
    <property type="term" value="C:ciliary basal body"/>
    <property type="evidence" value="ECO:0007669"/>
    <property type="project" value="Ensembl"/>
</dbReference>
<dbReference type="GO" id="GO:0005829">
    <property type="term" value="C:cytosol"/>
    <property type="evidence" value="ECO:0007669"/>
    <property type="project" value="Ensembl"/>
</dbReference>
<dbReference type="GO" id="GO:0005654">
    <property type="term" value="C:nucleoplasm"/>
    <property type="evidence" value="ECO:0007669"/>
    <property type="project" value="Ensembl"/>
</dbReference>
<dbReference type="GO" id="GO:0060271">
    <property type="term" value="P:cilium assembly"/>
    <property type="evidence" value="ECO:0007669"/>
    <property type="project" value="Ensembl"/>
</dbReference>
<dbReference type="GO" id="GO:0003352">
    <property type="term" value="P:regulation of cilium movement"/>
    <property type="evidence" value="ECO:0007669"/>
    <property type="project" value="Ensembl"/>
</dbReference>
<dbReference type="InterPro" id="IPR021298">
    <property type="entry name" value="CFAP298"/>
</dbReference>
<dbReference type="PANTHER" id="PTHR13238:SF0">
    <property type="entry name" value="CILIA- AND FLAGELLA-ASSOCIATED PROTEIN 298"/>
    <property type="match status" value="1"/>
</dbReference>
<dbReference type="PANTHER" id="PTHR13238">
    <property type="entry name" value="PROTEIN C21ORF59"/>
    <property type="match status" value="1"/>
</dbReference>
<dbReference type="Pfam" id="PF11069">
    <property type="entry name" value="CFAP298"/>
    <property type="match status" value="1"/>
</dbReference>
<protein>
    <recommendedName>
        <fullName evidence="5">Cilia- and flagella-associated protein 298</fullName>
    </recommendedName>
    <alternativeName>
        <fullName evidence="5">Protein kurly homolog</fullName>
    </alternativeName>
</protein>
<organism>
    <name type="scientific">Mus musculus</name>
    <name type="common">Mouse</name>
    <dbReference type="NCBI Taxonomy" id="10090"/>
    <lineage>
        <taxon>Eukaryota</taxon>
        <taxon>Metazoa</taxon>
        <taxon>Chordata</taxon>
        <taxon>Craniata</taxon>
        <taxon>Vertebrata</taxon>
        <taxon>Euteleostomi</taxon>
        <taxon>Mammalia</taxon>
        <taxon>Eutheria</taxon>
        <taxon>Euarchontoglires</taxon>
        <taxon>Glires</taxon>
        <taxon>Rodentia</taxon>
        <taxon>Myomorpha</taxon>
        <taxon>Muroidea</taxon>
        <taxon>Muridae</taxon>
        <taxon>Murinae</taxon>
        <taxon>Mus</taxon>
        <taxon>Mus</taxon>
    </lineage>
</organism>
<sequence>MVVLHVKRGDESQFLLQAPGSTELEELTAQVARVYNGRLKVHRLCSEMEELAEHGVFLPPNMQGLTDEQIEELKLKDEWGEKCVPSGGSVFTKDEIGRRNGQAPNEKMKQVLKKTVEEAKAIVSKKQVEAGVFVTMEMVKDALDQLRGAVMIVYPMGLPPYDPIRMEFENKEDLSGTQAALEVIQESEAQLWWAAKELRRTKKLSDYVGKNEKTKIIVKIQQRGQGAPAREPVISSEEHKQLMLFYHRRQEELKKLEENDDDSCLNSPWADNTALKRHFHGVKDIKWRPR</sequence>
<evidence type="ECO:0000250" key="1">
    <source>
        <dbReference type="UniProtKB" id="A0A1L8HCK2"/>
    </source>
</evidence>
<evidence type="ECO:0000250" key="2">
    <source>
        <dbReference type="UniProtKB" id="P57076"/>
    </source>
</evidence>
<evidence type="ECO:0000250" key="3">
    <source>
        <dbReference type="UniProtKB" id="Q5U3Z0"/>
    </source>
</evidence>
<evidence type="ECO:0000250" key="4">
    <source>
        <dbReference type="UniProtKB" id="Q6DRC3"/>
    </source>
</evidence>
<evidence type="ECO:0000305" key="5"/>
<proteinExistence type="evidence at protein level"/>
<reference key="1">
    <citation type="journal article" date="2005" name="Science">
        <title>The transcriptional landscape of the mammalian genome.</title>
        <authorList>
            <person name="Carninci P."/>
            <person name="Kasukawa T."/>
            <person name="Katayama S."/>
            <person name="Gough J."/>
            <person name="Frith M.C."/>
            <person name="Maeda N."/>
            <person name="Oyama R."/>
            <person name="Ravasi T."/>
            <person name="Lenhard B."/>
            <person name="Wells C."/>
            <person name="Kodzius R."/>
            <person name="Shimokawa K."/>
            <person name="Bajic V.B."/>
            <person name="Brenner S.E."/>
            <person name="Batalov S."/>
            <person name="Forrest A.R."/>
            <person name="Zavolan M."/>
            <person name="Davis M.J."/>
            <person name="Wilming L.G."/>
            <person name="Aidinis V."/>
            <person name="Allen J.E."/>
            <person name="Ambesi-Impiombato A."/>
            <person name="Apweiler R."/>
            <person name="Aturaliya R.N."/>
            <person name="Bailey T.L."/>
            <person name="Bansal M."/>
            <person name="Baxter L."/>
            <person name="Beisel K.W."/>
            <person name="Bersano T."/>
            <person name="Bono H."/>
            <person name="Chalk A.M."/>
            <person name="Chiu K.P."/>
            <person name="Choudhary V."/>
            <person name="Christoffels A."/>
            <person name="Clutterbuck D.R."/>
            <person name="Crowe M.L."/>
            <person name="Dalla E."/>
            <person name="Dalrymple B.P."/>
            <person name="de Bono B."/>
            <person name="Della Gatta G."/>
            <person name="di Bernardo D."/>
            <person name="Down T."/>
            <person name="Engstrom P."/>
            <person name="Fagiolini M."/>
            <person name="Faulkner G."/>
            <person name="Fletcher C.F."/>
            <person name="Fukushima T."/>
            <person name="Furuno M."/>
            <person name="Futaki S."/>
            <person name="Gariboldi M."/>
            <person name="Georgii-Hemming P."/>
            <person name="Gingeras T.R."/>
            <person name="Gojobori T."/>
            <person name="Green R.E."/>
            <person name="Gustincich S."/>
            <person name="Harbers M."/>
            <person name="Hayashi Y."/>
            <person name="Hensch T.K."/>
            <person name="Hirokawa N."/>
            <person name="Hill D."/>
            <person name="Huminiecki L."/>
            <person name="Iacono M."/>
            <person name="Ikeo K."/>
            <person name="Iwama A."/>
            <person name="Ishikawa T."/>
            <person name="Jakt M."/>
            <person name="Kanapin A."/>
            <person name="Katoh M."/>
            <person name="Kawasawa Y."/>
            <person name="Kelso J."/>
            <person name="Kitamura H."/>
            <person name="Kitano H."/>
            <person name="Kollias G."/>
            <person name="Krishnan S.P."/>
            <person name="Kruger A."/>
            <person name="Kummerfeld S.K."/>
            <person name="Kurochkin I.V."/>
            <person name="Lareau L.F."/>
            <person name="Lazarevic D."/>
            <person name="Lipovich L."/>
            <person name="Liu J."/>
            <person name="Liuni S."/>
            <person name="McWilliam S."/>
            <person name="Madan Babu M."/>
            <person name="Madera M."/>
            <person name="Marchionni L."/>
            <person name="Matsuda H."/>
            <person name="Matsuzawa S."/>
            <person name="Miki H."/>
            <person name="Mignone F."/>
            <person name="Miyake S."/>
            <person name="Morris K."/>
            <person name="Mottagui-Tabar S."/>
            <person name="Mulder N."/>
            <person name="Nakano N."/>
            <person name="Nakauchi H."/>
            <person name="Ng P."/>
            <person name="Nilsson R."/>
            <person name="Nishiguchi S."/>
            <person name="Nishikawa S."/>
            <person name="Nori F."/>
            <person name="Ohara O."/>
            <person name="Okazaki Y."/>
            <person name="Orlando V."/>
            <person name="Pang K.C."/>
            <person name="Pavan W.J."/>
            <person name="Pavesi G."/>
            <person name="Pesole G."/>
            <person name="Petrovsky N."/>
            <person name="Piazza S."/>
            <person name="Reed J."/>
            <person name="Reid J.F."/>
            <person name="Ring B.Z."/>
            <person name="Ringwald M."/>
            <person name="Rost B."/>
            <person name="Ruan Y."/>
            <person name="Salzberg S.L."/>
            <person name="Sandelin A."/>
            <person name="Schneider C."/>
            <person name="Schoenbach C."/>
            <person name="Sekiguchi K."/>
            <person name="Semple C.A."/>
            <person name="Seno S."/>
            <person name="Sessa L."/>
            <person name="Sheng Y."/>
            <person name="Shibata Y."/>
            <person name="Shimada H."/>
            <person name="Shimada K."/>
            <person name="Silva D."/>
            <person name="Sinclair B."/>
            <person name="Sperling S."/>
            <person name="Stupka E."/>
            <person name="Sugiura K."/>
            <person name="Sultana R."/>
            <person name="Takenaka Y."/>
            <person name="Taki K."/>
            <person name="Tammoja K."/>
            <person name="Tan S.L."/>
            <person name="Tang S."/>
            <person name="Taylor M.S."/>
            <person name="Tegner J."/>
            <person name="Teichmann S.A."/>
            <person name="Ueda H.R."/>
            <person name="van Nimwegen E."/>
            <person name="Verardo R."/>
            <person name="Wei C.L."/>
            <person name="Yagi K."/>
            <person name="Yamanishi H."/>
            <person name="Zabarovsky E."/>
            <person name="Zhu S."/>
            <person name="Zimmer A."/>
            <person name="Hide W."/>
            <person name="Bult C."/>
            <person name="Grimmond S.M."/>
            <person name="Teasdale R.D."/>
            <person name="Liu E.T."/>
            <person name="Brusic V."/>
            <person name="Quackenbush J."/>
            <person name="Wahlestedt C."/>
            <person name="Mattick J.S."/>
            <person name="Hume D.A."/>
            <person name="Kai C."/>
            <person name="Sasaki D."/>
            <person name="Tomaru Y."/>
            <person name="Fukuda S."/>
            <person name="Kanamori-Katayama M."/>
            <person name="Suzuki M."/>
            <person name="Aoki J."/>
            <person name="Arakawa T."/>
            <person name="Iida J."/>
            <person name="Imamura K."/>
            <person name="Itoh M."/>
            <person name="Kato T."/>
            <person name="Kawaji H."/>
            <person name="Kawagashira N."/>
            <person name="Kawashima T."/>
            <person name="Kojima M."/>
            <person name="Kondo S."/>
            <person name="Konno H."/>
            <person name="Nakano K."/>
            <person name="Ninomiya N."/>
            <person name="Nishio T."/>
            <person name="Okada M."/>
            <person name="Plessy C."/>
            <person name="Shibata K."/>
            <person name="Shiraki T."/>
            <person name="Suzuki S."/>
            <person name="Tagami M."/>
            <person name="Waki K."/>
            <person name="Watahiki A."/>
            <person name="Okamura-Oho Y."/>
            <person name="Suzuki H."/>
            <person name="Kawai J."/>
            <person name="Hayashizaki Y."/>
        </authorList>
    </citation>
    <scope>NUCLEOTIDE SEQUENCE [LARGE SCALE MRNA]</scope>
    <source>
        <strain>C57BL/6J</strain>
        <tissue>Corpora quadrigemina</tissue>
    </source>
</reference>
<reference key="2">
    <citation type="journal article" date="2009" name="PLoS Biol.">
        <title>Lineage-specific biology revealed by a finished genome assembly of the mouse.</title>
        <authorList>
            <person name="Church D.M."/>
            <person name="Goodstadt L."/>
            <person name="Hillier L.W."/>
            <person name="Zody M.C."/>
            <person name="Goldstein S."/>
            <person name="She X."/>
            <person name="Bult C.J."/>
            <person name="Agarwala R."/>
            <person name="Cherry J.L."/>
            <person name="DiCuccio M."/>
            <person name="Hlavina W."/>
            <person name="Kapustin Y."/>
            <person name="Meric P."/>
            <person name="Maglott D."/>
            <person name="Birtle Z."/>
            <person name="Marques A.C."/>
            <person name="Graves T."/>
            <person name="Zhou S."/>
            <person name="Teague B."/>
            <person name="Potamousis K."/>
            <person name="Churas C."/>
            <person name="Place M."/>
            <person name="Herschleb J."/>
            <person name="Runnheim R."/>
            <person name="Forrest D."/>
            <person name="Amos-Landgraf J."/>
            <person name="Schwartz D.C."/>
            <person name="Cheng Z."/>
            <person name="Lindblad-Toh K."/>
            <person name="Eichler E.E."/>
            <person name="Ponting C.P."/>
        </authorList>
    </citation>
    <scope>NUCLEOTIDE SEQUENCE [LARGE SCALE GENOMIC DNA]</scope>
    <source>
        <strain>C57BL/6J</strain>
    </source>
</reference>
<reference key="3">
    <citation type="submission" date="2005-07" db="EMBL/GenBank/DDBJ databases">
        <authorList>
            <person name="Mural R.J."/>
            <person name="Adams M.D."/>
            <person name="Myers E.W."/>
            <person name="Smith H.O."/>
            <person name="Venter J.C."/>
        </authorList>
    </citation>
    <scope>NUCLEOTIDE SEQUENCE [LARGE SCALE GENOMIC DNA]</scope>
</reference>
<reference key="4">
    <citation type="journal article" date="2004" name="Genome Res.">
        <title>The status, quality, and expansion of the NIH full-length cDNA project: the Mammalian Gene Collection (MGC).</title>
        <authorList>
            <consortium name="The MGC Project Team"/>
        </authorList>
    </citation>
    <scope>NUCLEOTIDE SEQUENCE [LARGE SCALE MRNA]</scope>
    <source>
        <strain>FVB/N</strain>
        <tissue>Salivary gland</tissue>
    </source>
</reference>
<reference key="5">
    <citation type="journal article" date="2010" name="Cell">
        <title>A tissue-specific atlas of mouse protein phosphorylation and expression.</title>
        <authorList>
            <person name="Huttlin E.L."/>
            <person name="Jedrychowski M.P."/>
            <person name="Elias J.E."/>
            <person name="Goswami T."/>
            <person name="Rad R."/>
            <person name="Beausoleil S.A."/>
            <person name="Villen J."/>
            <person name="Haas W."/>
            <person name="Sowa M.E."/>
            <person name="Gygi S.P."/>
        </authorList>
    </citation>
    <scope>IDENTIFICATION BY MASS SPECTROMETRY [LARGE SCALE ANALYSIS]</scope>
    <source>
        <tissue>Lung</tissue>
        <tissue>Testis</tissue>
    </source>
</reference>
<keyword id="KW-0966">Cell projection</keyword>
<keyword id="KW-0969">Cilium</keyword>
<keyword id="KW-0963">Cytoplasm</keyword>
<keyword id="KW-0206">Cytoskeleton</keyword>
<keyword id="KW-1185">Reference proteome</keyword>